<sequence>MARLYYDADANLDLLANKTVAIIGYGSQGHAHALNLKDSGVQVIVGLYEGSKSAAKAQEAGLTVKSAADAAKAADLIMILLPDEVQRTVYTQDIQPHLSADKVLAFAHGFNIHFAQVVPPSDVDVVMVAPKGPGHLVRRTYTQGQGVPCLFAVYQDASGQARDRAMAYAKGIGGTRAGILETTFREETETDLFGEQAVLCGGLTALIKAGFETLVEAGYQPELAYFECMHEVKLIVDLIVEGGLAKMRDSISNTAEYGDYTRGPRIVDDRTKAEMRRVLHEIQTGQFAKEFVLENMSGKAGFTATRRRESEHAIEEVGKDLRAMFSWTDKA</sequence>
<proteinExistence type="inferred from homology"/>
<evidence type="ECO:0000255" key="1">
    <source>
        <dbReference type="HAMAP-Rule" id="MF_00435"/>
    </source>
</evidence>
<evidence type="ECO:0000255" key="2">
    <source>
        <dbReference type="PROSITE-ProRule" id="PRU01197"/>
    </source>
</evidence>
<evidence type="ECO:0000255" key="3">
    <source>
        <dbReference type="PROSITE-ProRule" id="PRU01198"/>
    </source>
</evidence>
<protein>
    <recommendedName>
        <fullName evidence="1">Ketol-acid reductoisomerase (NADP(+))</fullName>
        <shortName evidence="1">KARI</shortName>
        <ecNumber evidence="1">1.1.1.86</ecNumber>
    </recommendedName>
    <alternativeName>
        <fullName evidence="1">Acetohydroxy-acid isomeroreductase</fullName>
        <shortName evidence="1">AHIR</shortName>
    </alternativeName>
    <alternativeName>
        <fullName evidence="1">Alpha-keto-beta-hydroxylacyl reductoisomerase</fullName>
    </alternativeName>
    <alternativeName>
        <fullName evidence="1">Ketol-acid reductoisomerase type 1</fullName>
    </alternativeName>
    <alternativeName>
        <fullName evidence="1">Ketol-acid reductoisomerase type I</fullName>
    </alternativeName>
</protein>
<dbReference type="EC" id="1.1.1.86" evidence="1"/>
<dbReference type="EMBL" id="CP000828">
    <property type="protein sequence ID" value="ABW30509.1"/>
    <property type="molecule type" value="Genomic_DNA"/>
</dbReference>
<dbReference type="RefSeq" id="WP_012165733.1">
    <property type="nucleotide sequence ID" value="NC_009925.1"/>
</dbReference>
<dbReference type="SMR" id="B0CE35"/>
<dbReference type="STRING" id="329726.AM1_5555"/>
<dbReference type="KEGG" id="amr:AM1_5555"/>
<dbReference type="eggNOG" id="COG0059">
    <property type="taxonomic scope" value="Bacteria"/>
</dbReference>
<dbReference type="HOGENOM" id="CLU_033821_0_1_3"/>
<dbReference type="OrthoDB" id="9804088at2"/>
<dbReference type="UniPathway" id="UPA00047">
    <property type="reaction ID" value="UER00056"/>
</dbReference>
<dbReference type="UniPathway" id="UPA00049">
    <property type="reaction ID" value="UER00060"/>
</dbReference>
<dbReference type="Proteomes" id="UP000000268">
    <property type="component" value="Chromosome"/>
</dbReference>
<dbReference type="GO" id="GO:0005829">
    <property type="term" value="C:cytosol"/>
    <property type="evidence" value="ECO:0007669"/>
    <property type="project" value="TreeGrafter"/>
</dbReference>
<dbReference type="GO" id="GO:0004455">
    <property type="term" value="F:ketol-acid reductoisomerase activity"/>
    <property type="evidence" value="ECO:0007669"/>
    <property type="project" value="UniProtKB-UniRule"/>
</dbReference>
<dbReference type="GO" id="GO:0000287">
    <property type="term" value="F:magnesium ion binding"/>
    <property type="evidence" value="ECO:0007669"/>
    <property type="project" value="UniProtKB-UniRule"/>
</dbReference>
<dbReference type="GO" id="GO:0050661">
    <property type="term" value="F:NADP binding"/>
    <property type="evidence" value="ECO:0007669"/>
    <property type="project" value="InterPro"/>
</dbReference>
<dbReference type="GO" id="GO:0009097">
    <property type="term" value="P:isoleucine biosynthetic process"/>
    <property type="evidence" value="ECO:0007669"/>
    <property type="project" value="UniProtKB-UniRule"/>
</dbReference>
<dbReference type="GO" id="GO:0009099">
    <property type="term" value="P:L-valine biosynthetic process"/>
    <property type="evidence" value="ECO:0007669"/>
    <property type="project" value="UniProtKB-UniRule"/>
</dbReference>
<dbReference type="FunFam" id="3.40.50.720:FF:000023">
    <property type="entry name" value="Ketol-acid reductoisomerase (NADP(+))"/>
    <property type="match status" value="1"/>
</dbReference>
<dbReference type="Gene3D" id="6.10.240.10">
    <property type="match status" value="1"/>
</dbReference>
<dbReference type="Gene3D" id="3.40.50.720">
    <property type="entry name" value="NAD(P)-binding Rossmann-like Domain"/>
    <property type="match status" value="1"/>
</dbReference>
<dbReference type="HAMAP" id="MF_00435">
    <property type="entry name" value="IlvC"/>
    <property type="match status" value="1"/>
</dbReference>
<dbReference type="InterPro" id="IPR008927">
    <property type="entry name" value="6-PGluconate_DH-like_C_sf"/>
</dbReference>
<dbReference type="InterPro" id="IPR013023">
    <property type="entry name" value="KARI"/>
</dbReference>
<dbReference type="InterPro" id="IPR000506">
    <property type="entry name" value="KARI_C"/>
</dbReference>
<dbReference type="InterPro" id="IPR013116">
    <property type="entry name" value="KARI_N"/>
</dbReference>
<dbReference type="InterPro" id="IPR014359">
    <property type="entry name" value="KARI_prok"/>
</dbReference>
<dbReference type="InterPro" id="IPR036291">
    <property type="entry name" value="NAD(P)-bd_dom_sf"/>
</dbReference>
<dbReference type="NCBIfam" id="TIGR00465">
    <property type="entry name" value="ilvC"/>
    <property type="match status" value="1"/>
</dbReference>
<dbReference type="NCBIfam" id="NF004017">
    <property type="entry name" value="PRK05479.1"/>
    <property type="match status" value="1"/>
</dbReference>
<dbReference type="NCBIfam" id="NF009940">
    <property type="entry name" value="PRK13403.1"/>
    <property type="match status" value="1"/>
</dbReference>
<dbReference type="PANTHER" id="PTHR21371">
    <property type="entry name" value="KETOL-ACID REDUCTOISOMERASE, MITOCHONDRIAL"/>
    <property type="match status" value="1"/>
</dbReference>
<dbReference type="PANTHER" id="PTHR21371:SF1">
    <property type="entry name" value="KETOL-ACID REDUCTOISOMERASE, MITOCHONDRIAL"/>
    <property type="match status" value="1"/>
</dbReference>
<dbReference type="Pfam" id="PF01450">
    <property type="entry name" value="KARI_C"/>
    <property type="match status" value="1"/>
</dbReference>
<dbReference type="Pfam" id="PF07991">
    <property type="entry name" value="KARI_N"/>
    <property type="match status" value="1"/>
</dbReference>
<dbReference type="PIRSF" id="PIRSF000116">
    <property type="entry name" value="IlvC_gammaproteo"/>
    <property type="match status" value="1"/>
</dbReference>
<dbReference type="SUPFAM" id="SSF48179">
    <property type="entry name" value="6-phosphogluconate dehydrogenase C-terminal domain-like"/>
    <property type="match status" value="1"/>
</dbReference>
<dbReference type="SUPFAM" id="SSF51735">
    <property type="entry name" value="NAD(P)-binding Rossmann-fold domains"/>
    <property type="match status" value="1"/>
</dbReference>
<dbReference type="PROSITE" id="PS51851">
    <property type="entry name" value="KARI_C"/>
    <property type="match status" value="1"/>
</dbReference>
<dbReference type="PROSITE" id="PS51850">
    <property type="entry name" value="KARI_N"/>
    <property type="match status" value="1"/>
</dbReference>
<keyword id="KW-0028">Amino-acid biosynthesis</keyword>
<keyword id="KW-0100">Branched-chain amino acid biosynthesis</keyword>
<keyword id="KW-0460">Magnesium</keyword>
<keyword id="KW-0479">Metal-binding</keyword>
<keyword id="KW-0521">NADP</keyword>
<keyword id="KW-0560">Oxidoreductase</keyword>
<keyword id="KW-1185">Reference proteome</keyword>
<comment type="function">
    <text evidence="1">Involved in the biosynthesis of branched-chain amino acids (BCAA). Catalyzes an alkyl-migration followed by a ketol-acid reduction of (S)-2-acetolactate (S2AL) to yield (R)-2,3-dihydroxy-isovalerate. In the isomerase reaction, S2AL is rearranged via a Mg-dependent methyl migration to produce 3-hydroxy-3-methyl-2-ketobutyrate (HMKB). In the reductase reaction, this 2-ketoacid undergoes a metal-dependent reduction by NADPH to yield (R)-2,3-dihydroxy-isovalerate.</text>
</comment>
<comment type="catalytic activity">
    <reaction evidence="1">
        <text>(2R)-2,3-dihydroxy-3-methylbutanoate + NADP(+) = (2S)-2-acetolactate + NADPH + H(+)</text>
        <dbReference type="Rhea" id="RHEA:22068"/>
        <dbReference type="ChEBI" id="CHEBI:15378"/>
        <dbReference type="ChEBI" id="CHEBI:49072"/>
        <dbReference type="ChEBI" id="CHEBI:57783"/>
        <dbReference type="ChEBI" id="CHEBI:58349"/>
        <dbReference type="ChEBI" id="CHEBI:58476"/>
        <dbReference type="EC" id="1.1.1.86"/>
    </reaction>
</comment>
<comment type="catalytic activity">
    <reaction evidence="1">
        <text>(2R,3R)-2,3-dihydroxy-3-methylpentanoate + NADP(+) = (S)-2-ethyl-2-hydroxy-3-oxobutanoate + NADPH + H(+)</text>
        <dbReference type="Rhea" id="RHEA:13493"/>
        <dbReference type="ChEBI" id="CHEBI:15378"/>
        <dbReference type="ChEBI" id="CHEBI:49256"/>
        <dbReference type="ChEBI" id="CHEBI:49258"/>
        <dbReference type="ChEBI" id="CHEBI:57783"/>
        <dbReference type="ChEBI" id="CHEBI:58349"/>
        <dbReference type="EC" id="1.1.1.86"/>
    </reaction>
</comment>
<comment type="cofactor">
    <cofactor evidence="1">
        <name>Mg(2+)</name>
        <dbReference type="ChEBI" id="CHEBI:18420"/>
    </cofactor>
    <text evidence="1">Binds 2 magnesium ions per subunit.</text>
</comment>
<comment type="pathway">
    <text evidence="1">Amino-acid biosynthesis; L-isoleucine biosynthesis; L-isoleucine from 2-oxobutanoate: step 2/4.</text>
</comment>
<comment type="pathway">
    <text evidence="1">Amino-acid biosynthesis; L-valine biosynthesis; L-valine from pyruvate: step 2/4.</text>
</comment>
<comment type="similarity">
    <text evidence="1">Belongs to the ketol-acid reductoisomerase family.</text>
</comment>
<feature type="chain" id="PRO_1000080616" description="Ketol-acid reductoisomerase (NADP(+))">
    <location>
        <begin position="1"/>
        <end position="331"/>
    </location>
</feature>
<feature type="domain" description="KARI N-terminal Rossmann" evidence="2">
    <location>
        <begin position="2"/>
        <end position="182"/>
    </location>
</feature>
<feature type="domain" description="KARI C-terminal knotted" evidence="3">
    <location>
        <begin position="183"/>
        <end position="328"/>
    </location>
</feature>
<feature type="active site" evidence="1">
    <location>
        <position position="108"/>
    </location>
</feature>
<feature type="binding site" evidence="1">
    <location>
        <begin position="25"/>
        <end position="28"/>
    </location>
    <ligand>
        <name>NADP(+)</name>
        <dbReference type="ChEBI" id="CHEBI:58349"/>
    </ligand>
</feature>
<feature type="binding site" evidence="1">
    <location>
        <position position="51"/>
    </location>
    <ligand>
        <name>NADP(+)</name>
        <dbReference type="ChEBI" id="CHEBI:58349"/>
    </ligand>
</feature>
<feature type="binding site" evidence="1">
    <location>
        <position position="53"/>
    </location>
    <ligand>
        <name>NADP(+)</name>
        <dbReference type="ChEBI" id="CHEBI:58349"/>
    </ligand>
</feature>
<feature type="binding site" evidence="1">
    <location>
        <begin position="83"/>
        <end position="86"/>
    </location>
    <ligand>
        <name>NADP(+)</name>
        <dbReference type="ChEBI" id="CHEBI:58349"/>
    </ligand>
</feature>
<feature type="binding site" evidence="1">
    <location>
        <position position="134"/>
    </location>
    <ligand>
        <name>NADP(+)</name>
        <dbReference type="ChEBI" id="CHEBI:58349"/>
    </ligand>
</feature>
<feature type="binding site" evidence="1">
    <location>
        <position position="191"/>
    </location>
    <ligand>
        <name>Mg(2+)</name>
        <dbReference type="ChEBI" id="CHEBI:18420"/>
        <label>1</label>
    </ligand>
</feature>
<feature type="binding site" evidence="1">
    <location>
        <position position="191"/>
    </location>
    <ligand>
        <name>Mg(2+)</name>
        <dbReference type="ChEBI" id="CHEBI:18420"/>
        <label>2</label>
    </ligand>
</feature>
<feature type="binding site" evidence="1">
    <location>
        <position position="195"/>
    </location>
    <ligand>
        <name>Mg(2+)</name>
        <dbReference type="ChEBI" id="CHEBI:18420"/>
        <label>1</label>
    </ligand>
</feature>
<feature type="binding site" evidence="1">
    <location>
        <position position="227"/>
    </location>
    <ligand>
        <name>Mg(2+)</name>
        <dbReference type="ChEBI" id="CHEBI:18420"/>
        <label>2</label>
    </ligand>
</feature>
<feature type="binding site" evidence="1">
    <location>
        <position position="231"/>
    </location>
    <ligand>
        <name>Mg(2+)</name>
        <dbReference type="ChEBI" id="CHEBI:18420"/>
        <label>2</label>
    </ligand>
</feature>
<feature type="binding site" evidence="1">
    <location>
        <position position="252"/>
    </location>
    <ligand>
        <name>substrate</name>
    </ligand>
</feature>
<organism>
    <name type="scientific">Acaryochloris marina (strain MBIC 11017)</name>
    <dbReference type="NCBI Taxonomy" id="329726"/>
    <lineage>
        <taxon>Bacteria</taxon>
        <taxon>Bacillati</taxon>
        <taxon>Cyanobacteriota</taxon>
        <taxon>Cyanophyceae</taxon>
        <taxon>Acaryochloridales</taxon>
        <taxon>Acaryochloridaceae</taxon>
        <taxon>Acaryochloris</taxon>
    </lineage>
</organism>
<reference key="1">
    <citation type="journal article" date="2008" name="Proc. Natl. Acad. Sci. U.S.A.">
        <title>Niche adaptation and genome expansion in the chlorophyll d-producing cyanobacterium Acaryochloris marina.</title>
        <authorList>
            <person name="Swingley W.D."/>
            <person name="Chen M."/>
            <person name="Cheung P.C."/>
            <person name="Conrad A.L."/>
            <person name="Dejesa L.C."/>
            <person name="Hao J."/>
            <person name="Honchak B.M."/>
            <person name="Karbach L.E."/>
            <person name="Kurdoglu A."/>
            <person name="Lahiri S."/>
            <person name="Mastrian S.D."/>
            <person name="Miyashita H."/>
            <person name="Page L."/>
            <person name="Ramakrishna P."/>
            <person name="Satoh S."/>
            <person name="Sattley W.M."/>
            <person name="Shimada Y."/>
            <person name="Taylor H.L."/>
            <person name="Tomo T."/>
            <person name="Tsuchiya T."/>
            <person name="Wang Z.T."/>
            <person name="Raymond J."/>
            <person name="Mimuro M."/>
            <person name="Blankenship R.E."/>
            <person name="Touchman J.W."/>
        </authorList>
    </citation>
    <scope>NUCLEOTIDE SEQUENCE [LARGE SCALE GENOMIC DNA]</scope>
    <source>
        <strain>MBIC 11017</strain>
    </source>
</reference>
<gene>
    <name evidence="1" type="primary">ilvC</name>
    <name type="ordered locus">AM1_5555</name>
</gene>
<accession>B0CE35</accession>
<name>ILVC_ACAM1</name>